<evidence type="ECO:0000255" key="1">
    <source>
        <dbReference type="HAMAP-Rule" id="MF_01280"/>
    </source>
</evidence>
<evidence type="ECO:0000269" key="2">
    <source>
    </source>
</evidence>
<evidence type="ECO:0000305" key="3"/>
<dbReference type="EC" id="2.4.1.315"/>
<dbReference type="EMBL" id="Y14370">
    <property type="protein sequence ID" value="CAA74741.1"/>
    <property type="molecule type" value="Genomic_DNA"/>
</dbReference>
<dbReference type="EMBL" id="CP000046">
    <property type="protein sequence ID" value="AAW36488.1"/>
    <property type="molecule type" value="Genomic_DNA"/>
</dbReference>
<dbReference type="RefSeq" id="WP_000258650.1">
    <property type="nucleotide sequence ID" value="NZ_JBGOFO010000002.1"/>
</dbReference>
<dbReference type="SMR" id="Q5HH69"/>
<dbReference type="CAZy" id="GT28">
    <property type="family name" value="Glycosyltransferase Family 28"/>
</dbReference>
<dbReference type="KEGG" id="sac:SACOL1022"/>
<dbReference type="HOGENOM" id="CLU_028367_0_1_9"/>
<dbReference type="BRENDA" id="2.4.1.315">
    <property type="organism ID" value="3352"/>
</dbReference>
<dbReference type="UniPathway" id="UPA00894"/>
<dbReference type="Proteomes" id="UP000000530">
    <property type="component" value="Chromosome"/>
</dbReference>
<dbReference type="GO" id="GO:0005886">
    <property type="term" value="C:plasma membrane"/>
    <property type="evidence" value="ECO:0007669"/>
    <property type="project" value="UniProtKB-SubCell"/>
</dbReference>
<dbReference type="GO" id="GO:0047228">
    <property type="term" value="F:1,2-diacylglycerol 3-glucosyltransferase activity"/>
    <property type="evidence" value="ECO:0000314"/>
    <property type="project" value="UniProtKB"/>
</dbReference>
<dbReference type="GO" id="GO:0009246">
    <property type="term" value="P:enterobacterial common antigen biosynthetic process"/>
    <property type="evidence" value="ECO:0007669"/>
    <property type="project" value="UniProtKB-UniPathway"/>
</dbReference>
<dbReference type="GO" id="GO:0009247">
    <property type="term" value="P:glycolipid biosynthetic process"/>
    <property type="evidence" value="ECO:0007669"/>
    <property type="project" value="UniProtKB-UniRule"/>
</dbReference>
<dbReference type="GO" id="GO:0070395">
    <property type="term" value="P:lipoteichoic acid biosynthetic process"/>
    <property type="evidence" value="ECO:0007669"/>
    <property type="project" value="UniProtKB-UniRule"/>
</dbReference>
<dbReference type="CDD" id="cd17507">
    <property type="entry name" value="GT28_Beta-DGS-like"/>
    <property type="match status" value="1"/>
</dbReference>
<dbReference type="Gene3D" id="3.40.50.2000">
    <property type="entry name" value="Glycogen Phosphorylase B"/>
    <property type="match status" value="2"/>
</dbReference>
<dbReference type="HAMAP" id="MF_01280">
    <property type="entry name" value="Diacylglyc_glucosyltr"/>
    <property type="match status" value="1"/>
</dbReference>
<dbReference type="InterPro" id="IPR009695">
    <property type="entry name" value="Diacylglyc_glucosyltr_N"/>
</dbReference>
<dbReference type="InterPro" id="IPR007235">
    <property type="entry name" value="Glyco_trans_28_C"/>
</dbReference>
<dbReference type="InterPro" id="IPR050519">
    <property type="entry name" value="Glycosyltransf_28_UgtP"/>
</dbReference>
<dbReference type="InterPro" id="IPR023589">
    <property type="entry name" value="Pro_diacylglycrl_glcsylTrfase"/>
</dbReference>
<dbReference type="NCBIfam" id="NF010134">
    <property type="entry name" value="PRK13608.1"/>
    <property type="match status" value="1"/>
</dbReference>
<dbReference type="PANTHER" id="PTHR43025">
    <property type="entry name" value="MONOGALACTOSYLDIACYLGLYCEROL SYNTHASE"/>
    <property type="match status" value="1"/>
</dbReference>
<dbReference type="PANTHER" id="PTHR43025:SF3">
    <property type="entry name" value="MONOGALACTOSYLDIACYLGLYCEROL SYNTHASE 1, CHLOROPLASTIC"/>
    <property type="match status" value="1"/>
</dbReference>
<dbReference type="Pfam" id="PF04101">
    <property type="entry name" value="Glyco_tran_28_C"/>
    <property type="match status" value="1"/>
</dbReference>
<dbReference type="Pfam" id="PF06925">
    <property type="entry name" value="MGDG_synth"/>
    <property type="match status" value="1"/>
</dbReference>
<dbReference type="SUPFAM" id="SSF53756">
    <property type="entry name" value="UDP-Glycosyltransferase/glycogen phosphorylase"/>
    <property type="match status" value="1"/>
</dbReference>
<keyword id="KW-0119">Carbohydrate metabolism</keyword>
<keyword id="KW-1003">Cell membrane</keyword>
<keyword id="KW-0328">Glycosyltransferase</keyword>
<keyword id="KW-0444">Lipid biosynthesis</keyword>
<keyword id="KW-0443">Lipid metabolism</keyword>
<keyword id="KW-0472">Membrane</keyword>
<keyword id="KW-0808">Transferase</keyword>
<protein>
    <recommendedName>
        <fullName evidence="1">Processive diacylglycerol beta-glucosyltransferase</fullName>
        <ecNumber>2.4.1.315</ecNumber>
    </recommendedName>
    <alternativeName>
        <fullName evidence="1">Beta-diglucosyldiacylglycerol synthase</fullName>
        <shortName evidence="1">Beta-DGS</shortName>
        <shortName evidence="1">DGlcDAG synthase</shortName>
        <shortName evidence="1">Glc2-DAG synthase</shortName>
    </alternativeName>
    <alternativeName>
        <fullName evidence="1">Beta-gentiobiosyldiacylglycerol synthase</fullName>
    </alternativeName>
    <alternativeName>
        <fullName evidence="1">Beta-monoglucosyldiacylglycerol synthase</fullName>
        <shortName evidence="1">Beta-MGS</shortName>
        <shortName evidence="1">MGlcDAG synthase</shortName>
    </alternativeName>
    <alternativeName>
        <fullName>Diglucosyl diacylglycerol synthase (1,6-linking)</fullName>
    </alternativeName>
    <alternativeName>
        <fullName evidence="1">Glucosyl-beta-1,6-glucosyldiacylglycerol synthase</fullName>
    </alternativeName>
    <alternativeName>
        <fullName evidence="1">UDP glucosyltransferase</fullName>
    </alternativeName>
    <alternativeName>
        <fullName evidence="1">UDP-glucose:1,2-diacylglycerol-3-beta-D-glucosyltransferase</fullName>
    </alternativeName>
</protein>
<name>UGTP_STAAC</name>
<gene>
    <name evidence="1" type="primary">ugtP</name>
    <name type="ordered locus">SACOL1022</name>
</gene>
<accession>Q5HH69</accession>
<accession>O86492</accession>
<organism>
    <name type="scientific">Staphylococcus aureus (strain COL)</name>
    <dbReference type="NCBI Taxonomy" id="93062"/>
    <lineage>
        <taxon>Bacteria</taxon>
        <taxon>Bacillati</taxon>
        <taxon>Bacillota</taxon>
        <taxon>Bacilli</taxon>
        <taxon>Bacillales</taxon>
        <taxon>Staphylococcaceae</taxon>
        <taxon>Staphylococcus</taxon>
    </lineage>
</organism>
<feature type="chain" id="PRO_0000308445" description="Processive diacylglycerol beta-glucosyltransferase">
    <location>
        <begin position="1"/>
        <end position="391"/>
    </location>
</feature>
<feature type="sequence conflict" description="In Ref. 1; CAA74741." evidence="3" ref="1">
    <original>SNENV</original>
    <variation>LTRMY</variation>
    <location>
        <begin position="254"/>
        <end position="258"/>
    </location>
</feature>
<feature type="sequence conflict" description="In Ref. 1; CAA74741." evidence="3" ref="1">
    <original>L</original>
    <variation>F</variation>
    <location>
        <position position="311"/>
    </location>
</feature>
<reference key="1">
    <citation type="journal article" date="1998" name="Microb. Drug Resist.">
        <title>Molecular cloning and DNA sequencing of the Staphylococcus aureus UDP-N-acetylmuramyl tripeptide synthetase (murE) gene, essential for the optimal expression of methicillin resistance.</title>
        <authorList>
            <person name="Ludovice A.M."/>
            <person name="Wu S.-W."/>
            <person name="de Lencastre H."/>
        </authorList>
    </citation>
    <scope>NUCLEOTIDE SEQUENCE [GENOMIC DNA]</scope>
</reference>
<reference key="2">
    <citation type="journal article" date="2005" name="J. Bacteriol.">
        <title>Insights on evolution of virulence and resistance from the complete genome analysis of an early methicillin-resistant Staphylococcus aureus strain and a biofilm-producing methicillin-resistant Staphylococcus epidermidis strain.</title>
        <authorList>
            <person name="Gill S.R."/>
            <person name="Fouts D.E."/>
            <person name="Archer G.L."/>
            <person name="Mongodin E.F."/>
            <person name="DeBoy R.T."/>
            <person name="Ravel J."/>
            <person name="Paulsen I.T."/>
            <person name="Kolonay J.F."/>
            <person name="Brinkac L.M."/>
            <person name="Beanan M.J."/>
            <person name="Dodson R.J."/>
            <person name="Daugherty S.C."/>
            <person name="Madupu R."/>
            <person name="Angiuoli S.V."/>
            <person name="Durkin A.S."/>
            <person name="Haft D.H."/>
            <person name="Vamathevan J.J."/>
            <person name="Khouri H."/>
            <person name="Utterback T.R."/>
            <person name="Lee C."/>
            <person name="Dimitrov G."/>
            <person name="Jiang L."/>
            <person name="Qin H."/>
            <person name="Weidman J."/>
            <person name="Tran K."/>
            <person name="Kang K.H."/>
            <person name="Hance I.R."/>
            <person name="Nelson K.E."/>
            <person name="Fraser C.M."/>
        </authorList>
    </citation>
    <scope>NUCLEOTIDE SEQUENCE [LARGE SCALE GENOMIC DNA]</scope>
    <source>
        <strain>COL</strain>
    </source>
</reference>
<reference key="3">
    <citation type="journal article" date="2000" name="Eur. J. Biochem.">
        <title>Novel processive and nonprocessive glycosyltransferases from Staphylococcus aureus and Arabidopsis thaliana synthesize glycoglycerolipids, glycophospholipids, glycosphingolipids and glycosylsterols.</title>
        <authorList>
            <person name="Jorasch P."/>
            <person name="Warnecke D.C."/>
            <person name="Lindner B."/>
            <person name="Zaehringer U."/>
            <person name="Heinz E."/>
        </authorList>
    </citation>
    <scope>FUNCTION</scope>
    <scope>CATALYTIC ACTIVITY</scope>
    <scope>PROCESSIVITY</scope>
    <scope>SUBSTRATE SPECIFICITY</scope>
</reference>
<sequence>MVTQNKKILIITGSFGNGHMQVTQSIVNQLNDMNLDHLSVIEHDLFMEAHPILTSICKKWYINSFKYFRNMYKGFYYSRPDKLDKCFYKYYGLNKLINLLIKEKPDLILLTFPTPVMSVLTEQFNINIPVATVMTDYRLHKNWITPYSTRYYVATKETKQDFIDVGIDPSTVKVTGIPIDNKFETPINQKQWLIDNNLDPDKQTILMSAGAFGVSKGFDTMITDILAKSANAQVVMICGKSKELKRSLTAKFKSNENVLILGYTKHMNEWMASSQLMITKPGGITITEGFARCIPMIFLNPAPGQELENALYFEEKGFGKIADTPEEAIKIVASLTNGNEQLTNMISTMEQDKIKYATQTICRDLLDLIGHSSQPQEIYGKVPLYARFFVK</sequence>
<proteinExistence type="evidence at protein level"/>
<comment type="function">
    <text evidence="1 2">Processive glucosyltransferase involved in the biosynthesis of both the bilayer- and non-bilayer-forming membrane glucolipids. Is able to successively transfer two glucosyl residues to diacylglycerol (DAG), thereby catalyzing the formation of beta-monoglucosyl-DAG (3-O-(beta-D-glucopyranosyl)-1,2-diacyl-sn-glycerol) and beta-diglucosyl-DAG (3-O-(beta-D-glucopyranosyl-beta-(1-&gt;6)-D-glucopyranosyl)-1,2-diacyl-sn-glycerol). Beta-diglucosyl-DAG is the predominant glycolipid found in Bacillales and is also used as a membrane anchor for lipoteichoic acid (LTA). In vitro, UgtP can also use cholesterol, cholesterolglucoside and the fluorescent substrate 6-(N-7-nitrobenz-2-oxa-1,3-diazol-4-yl)-amino-caproyl-sphingosine (NBD-ceramide) as sugar acceptors, but it can only use UDP-glucose as sugar donor.</text>
</comment>
<comment type="catalytic activity">
    <reaction evidence="2">
        <text>a 1,2-diacyl-3-O-(beta-D-glucopyranosyl)-sn-glycerol + UDP-alpha-D-glucose = a 1,2-diacyl-3-O-(beta-D-Glc-(1-&gt;6)-beta-D-Glc)-sn-glycerol + UDP + H(+)</text>
        <dbReference type="Rhea" id="RHEA:39031"/>
        <dbReference type="ChEBI" id="CHEBI:15378"/>
        <dbReference type="ChEBI" id="CHEBI:58223"/>
        <dbReference type="ChEBI" id="CHEBI:58885"/>
        <dbReference type="ChEBI" id="CHEBI:75799"/>
        <dbReference type="ChEBI" id="CHEBI:76264"/>
        <dbReference type="EC" id="2.4.1.315"/>
    </reaction>
</comment>
<comment type="catalytic activity">
    <reaction evidence="1 2">
        <text>a 1,2-diacyl-sn-glycerol + UDP-alpha-D-glucose = a 1,2-diacyl-3-O-(beta-D-glucopyranosyl)-sn-glycerol + UDP + H(+)</text>
        <dbReference type="Rhea" id="RHEA:17285"/>
        <dbReference type="ChEBI" id="CHEBI:15378"/>
        <dbReference type="ChEBI" id="CHEBI:17815"/>
        <dbReference type="ChEBI" id="CHEBI:58223"/>
        <dbReference type="ChEBI" id="CHEBI:58885"/>
        <dbReference type="ChEBI" id="CHEBI:75799"/>
    </reaction>
</comment>
<comment type="pathway">
    <text evidence="1">Glycolipid metabolism; diglucosyl-diacylglycerol biosynthesis.</text>
</comment>
<comment type="subcellular location">
    <subcellularLocation>
        <location evidence="1">Cell membrane</location>
    </subcellularLocation>
</comment>
<comment type="similarity">
    <text evidence="1">Belongs to the glycosyltransferase 28 family. UgtP subfamily.</text>
</comment>